<comment type="catalytic activity">
    <reaction evidence="1">
        <text>tRNA(Phe) + L-phenylalanine + ATP = L-phenylalanyl-tRNA(Phe) + AMP + diphosphate + H(+)</text>
        <dbReference type="Rhea" id="RHEA:19413"/>
        <dbReference type="Rhea" id="RHEA-COMP:9668"/>
        <dbReference type="Rhea" id="RHEA-COMP:9699"/>
        <dbReference type="ChEBI" id="CHEBI:15378"/>
        <dbReference type="ChEBI" id="CHEBI:30616"/>
        <dbReference type="ChEBI" id="CHEBI:33019"/>
        <dbReference type="ChEBI" id="CHEBI:58095"/>
        <dbReference type="ChEBI" id="CHEBI:78442"/>
        <dbReference type="ChEBI" id="CHEBI:78531"/>
        <dbReference type="ChEBI" id="CHEBI:456215"/>
        <dbReference type="EC" id="6.1.1.20"/>
    </reaction>
</comment>
<comment type="cofactor">
    <cofactor evidence="1">
        <name>Mg(2+)</name>
        <dbReference type="ChEBI" id="CHEBI:18420"/>
    </cofactor>
    <text evidence="1">Binds 2 magnesium ions per tetramer.</text>
</comment>
<comment type="subunit">
    <text evidence="1">Tetramer of two alpha and two beta subunits.</text>
</comment>
<comment type="subcellular location">
    <subcellularLocation>
        <location evidence="1">Cytoplasm</location>
    </subcellularLocation>
</comment>
<comment type="similarity">
    <text evidence="1">Belongs to the phenylalanyl-tRNA synthetase beta subunit family. Type 1 subfamily.</text>
</comment>
<dbReference type="EC" id="6.1.1.20" evidence="1"/>
<dbReference type="EMBL" id="BA000026">
    <property type="protein sequence ID" value="BAC44713.1"/>
    <property type="molecule type" value="Genomic_DNA"/>
</dbReference>
<dbReference type="RefSeq" id="WP_044891314.1">
    <property type="nucleotide sequence ID" value="NC_004432.1"/>
</dbReference>
<dbReference type="SMR" id="Q8EUJ9"/>
<dbReference type="FunCoup" id="Q8EUJ9">
    <property type="interactions" value="245"/>
</dbReference>
<dbReference type="STRING" id="272633.gene:10732047"/>
<dbReference type="KEGG" id="mpe:MYPE9260"/>
<dbReference type="eggNOG" id="COG0072">
    <property type="taxonomic scope" value="Bacteria"/>
</dbReference>
<dbReference type="eggNOG" id="COG0073">
    <property type="taxonomic scope" value="Bacteria"/>
</dbReference>
<dbReference type="HOGENOM" id="CLU_016891_2_0_14"/>
<dbReference type="InParanoid" id="Q8EUJ9"/>
<dbReference type="Proteomes" id="UP000002522">
    <property type="component" value="Chromosome"/>
</dbReference>
<dbReference type="GO" id="GO:0009328">
    <property type="term" value="C:phenylalanine-tRNA ligase complex"/>
    <property type="evidence" value="ECO:0007669"/>
    <property type="project" value="TreeGrafter"/>
</dbReference>
<dbReference type="GO" id="GO:0005524">
    <property type="term" value="F:ATP binding"/>
    <property type="evidence" value="ECO:0007669"/>
    <property type="project" value="UniProtKB-UniRule"/>
</dbReference>
<dbReference type="GO" id="GO:0000287">
    <property type="term" value="F:magnesium ion binding"/>
    <property type="evidence" value="ECO:0007669"/>
    <property type="project" value="UniProtKB-UniRule"/>
</dbReference>
<dbReference type="GO" id="GO:0004826">
    <property type="term" value="F:phenylalanine-tRNA ligase activity"/>
    <property type="evidence" value="ECO:0007669"/>
    <property type="project" value="UniProtKB-UniRule"/>
</dbReference>
<dbReference type="GO" id="GO:0000049">
    <property type="term" value="F:tRNA binding"/>
    <property type="evidence" value="ECO:0007669"/>
    <property type="project" value="UniProtKB-KW"/>
</dbReference>
<dbReference type="GO" id="GO:0006432">
    <property type="term" value="P:phenylalanyl-tRNA aminoacylation"/>
    <property type="evidence" value="ECO:0007669"/>
    <property type="project" value="UniProtKB-UniRule"/>
</dbReference>
<dbReference type="CDD" id="cd02796">
    <property type="entry name" value="tRNA_bind_bactPheRS"/>
    <property type="match status" value="1"/>
</dbReference>
<dbReference type="Gene3D" id="3.30.56.10">
    <property type="match status" value="2"/>
</dbReference>
<dbReference type="Gene3D" id="3.30.930.10">
    <property type="entry name" value="Bira Bifunctional Protein, Domain 2"/>
    <property type="match status" value="1"/>
</dbReference>
<dbReference type="Gene3D" id="2.40.50.140">
    <property type="entry name" value="Nucleic acid-binding proteins"/>
    <property type="match status" value="1"/>
</dbReference>
<dbReference type="Gene3D" id="3.50.40.10">
    <property type="entry name" value="Phenylalanyl-trna Synthetase, Chain B, domain 3"/>
    <property type="match status" value="1"/>
</dbReference>
<dbReference type="HAMAP" id="MF_00283">
    <property type="entry name" value="Phe_tRNA_synth_beta1"/>
    <property type="match status" value="1"/>
</dbReference>
<dbReference type="InterPro" id="IPR045864">
    <property type="entry name" value="aa-tRNA-synth_II/BPL/LPL"/>
</dbReference>
<dbReference type="InterPro" id="IPR005146">
    <property type="entry name" value="B3/B4_tRNA-bd"/>
</dbReference>
<dbReference type="InterPro" id="IPR009061">
    <property type="entry name" value="DNA-bd_dom_put_sf"/>
</dbReference>
<dbReference type="InterPro" id="IPR012340">
    <property type="entry name" value="NA-bd_OB-fold"/>
</dbReference>
<dbReference type="InterPro" id="IPR045060">
    <property type="entry name" value="Phe-tRNA-ligase_IIc_bsu"/>
</dbReference>
<dbReference type="InterPro" id="IPR004532">
    <property type="entry name" value="Phe-tRNA-ligase_IIc_bsu_bact"/>
</dbReference>
<dbReference type="InterPro" id="IPR020825">
    <property type="entry name" value="Phe-tRNA_synthase-like_B3/B4"/>
</dbReference>
<dbReference type="InterPro" id="IPR041616">
    <property type="entry name" value="PheRS_beta_core"/>
</dbReference>
<dbReference type="InterPro" id="IPR002547">
    <property type="entry name" value="tRNA-bd_dom"/>
</dbReference>
<dbReference type="InterPro" id="IPR033714">
    <property type="entry name" value="tRNA_bind_bactPheRS"/>
</dbReference>
<dbReference type="InterPro" id="IPR005147">
    <property type="entry name" value="tRNA_synthase_B5-dom"/>
</dbReference>
<dbReference type="NCBIfam" id="TIGR00472">
    <property type="entry name" value="pheT_bact"/>
    <property type="match status" value="1"/>
</dbReference>
<dbReference type="NCBIfam" id="NF045760">
    <property type="entry name" value="YtpR"/>
    <property type="match status" value="1"/>
</dbReference>
<dbReference type="PANTHER" id="PTHR10947:SF0">
    <property type="entry name" value="PHENYLALANINE--TRNA LIGASE BETA SUBUNIT"/>
    <property type="match status" value="1"/>
</dbReference>
<dbReference type="PANTHER" id="PTHR10947">
    <property type="entry name" value="PHENYLALANYL-TRNA SYNTHETASE BETA CHAIN AND LEUCINE-RICH REPEAT-CONTAINING PROTEIN 47"/>
    <property type="match status" value="1"/>
</dbReference>
<dbReference type="Pfam" id="PF03483">
    <property type="entry name" value="B3_4"/>
    <property type="match status" value="1"/>
</dbReference>
<dbReference type="Pfam" id="PF01588">
    <property type="entry name" value="tRNA_bind"/>
    <property type="match status" value="1"/>
</dbReference>
<dbReference type="Pfam" id="PF17759">
    <property type="entry name" value="tRNA_synthFbeta"/>
    <property type="match status" value="1"/>
</dbReference>
<dbReference type="SMART" id="SM00873">
    <property type="entry name" value="B3_4"/>
    <property type="match status" value="1"/>
</dbReference>
<dbReference type="SMART" id="SM00874">
    <property type="entry name" value="B5"/>
    <property type="match status" value="1"/>
</dbReference>
<dbReference type="SUPFAM" id="SSF55681">
    <property type="entry name" value="Class II aaRS and biotin synthetases"/>
    <property type="match status" value="1"/>
</dbReference>
<dbReference type="SUPFAM" id="SSF50249">
    <property type="entry name" value="Nucleic acid-binding proteins"/>
    <property type="match status" value="1"/>
</dbReference>
<dbReference type="SUPFAM" id="SSF56037">
    <property type="entry name" value="PheT/TilS domain"/>
    <property type="match status" value="1"/>
</dbReference>
<dbReference type="SUPFAM" id="SSF46955">
    <property type="entry name" value="Putative DNA-binding domain"/>
    <property type="match status" value="1"/>
</dbReference>
<dbReference type="PROSITE" id="PS51483">
    <property type="entry name" value="B5"/>
    <property type="match status" value="1"/>
</dbReference>
<dbReference type="PROSITE" id="PS50886">
    <property type="entry name" value="TRBD"/>
    <property type="match status" value="1"/>
</dbReference>
<keyword id="KW-0030">Aminoacyl-tRNA synthetase</keyword>
<keyword id="KW-0067">ATP-binding</keyword>
<keyword id="KW-0963">Cytoplasm</keyword>
<keyword id="KW-0436">Ligase</keyword>
<keyword id="KW-0460">Magnesium</keyword>
<keyword id="KW-0479">Metal-binding</keyword>
<keyword id="KW-0547">Nucleotide-binding</keyword>
<keyword id="KW-0648">Protein biosynthesis</keyword>
<keyword id="KW-1185">Reference proteome</keyword>
<keyword id="KW-0694">RNA-binding</keyword>
<keyword id="KW-0820">tRNA-binding</keyword>
<organism>
    <name type="scientific">Malacoplasma penetrans (strain HF-2)</name>
    <name type="common">Mycoplasma penetrans</name>
    <dbReference type="NCBI Taxonomy" id="272633"/>
    <lineage>
        <taxon>Bacteria</taxon>
        <taxon>Bacillati</taxon>
        <taxon>Mycoplasmatota</taxon>
        <taxon>Mycoplasmoidales</taxon>
        <taxon>Mycoplasmoidaceae</taxon>
        <taxon>Malacoplasma</taxon>
    </lineage>
</organism>
<evidence type="ECO:0000255" key="1">
    <source>
        <dbReference type="HAMAP-Rule" id="MF_00283"/>
    </source>
</evidence>
<accession>Q8EUJ9</accession>
<sequence>MLLSRKLLNTLFPIFNKVSNQELETMLNSIGVEVENIIKFPRTENLIVGEIKKVEKHPNADKLNICEVFFENKIHVIICGAQNVRPGLKVIVAKVGTKMLDGRLIEAKDLLGVKSNGMICAYAELTTKTDVCSYDEIENIIELDNDAKLNDIDPLKYIGLDDEILDLSVPSNRNELNGVIPIAYDLISLYFPKSKIDFSLKNIENQKKTSIKINIDKELCRFFGVIDVSNVEIKTSNWKIKSFLLNCGITPINTIVDITNLNAIITSVPCHAYDKDKLGKEIAVSLNAHKEKFLALNDKEYVVENKSAVSVISNNKIVSLASVIGSKENSISNSTKNVLFEIGNFDNMAIRDASNKLGIKTNASTLGSKTIPLWITYKSFDYLIGLLKDLNIKVSSVNYVGDKLKDNLIDFDSQTIQDLLGQKTDVEKNLKLMGFNFVGKKVKAPVYREDLENISDLVEELTKKINVNNLELKPIESSFVDFEFDNFEENWNFLEKYFINKGFTLVKTLNLTSLENNKAFNLFGSKKSIKIMNPISSEREYFRNNLIQQHLEVLSNNYAHKINLYNIFEIQGLNYDGLWNKHLCLTLPIEHFNNKINNSKIVIDLLFIKSILTDLFNVFNIPFEIKAIENLSNDIEFISTNNGFEIYVKNKLIGIASQISPEILNKYKLDSSKPIYFVELIINDLLDSKISKSITVSDEKKEHNIARSITLSLDRNQNYKKIESVLDNYKNNLNLLDKFEIESVFIKDNKPSYTFSLEINPSKLNKKETNEINEIVERLIKDLINEGAEIKR</sequence>
<feature type="chain" id="PRO_0000232812" description="Phenylalanine--tRNA ligase beta subunit">
    <location>
        <begin position="1"/>
        <end position="792"/>
    </location>
</feature>
<feature type="domain" description="tRNA-binding" evidence="1">
    <location>
        <begin position="40"/>
        <end position="156"/>
    </location>
</feature>
<feature type="domain" description="B5" evidence="1">
    <location>
        <begin position="404"/>
        <end position="472"/>
    </location>
</feature>
<feature type="binding site" evidence="1">
    <location>
        <position position="450"/>
    </location>
    <ligand>
        <name>Mg(2+)</name>
        <dbReference type="ChEBI" id="CHEBI:18420"/>
        <note>shared with alpha subunit</note>
    </ligand>
</feature>
<feature type="binding site" evidence="1">
    <location>
        <position position="456"/>
    </location>
    <ligand>
        <name>Mg(2+)</name>
        <dbReference type="ChEBI" id="CHEBI:18420"/>
        <note>shared with alpha subunit</note>
    </ligand>
</feature>
<feature type="binding site" evidence="1">
    <location>
        <position position="459"/>
    </location>
    <ligand>
        <name>Mg(2+)</name>
        <dbReference type="ChEBI" id="CHEBI:18420"/>
        <note>shared with alpha subunit</note>
    </ligand>
</feature>
<feature type="binding site" evidence="1">
    <location>
        <position position="460"/>
    </location>
    <ligand>
        <name>Mg(2+)</name>
        <dbReference type="ChEBI" id="CHEBI:18420"/>
        <note>shared with alpha subunit</note>
    </ligand>
</feature>
<proteinExistence type="inferred from homology"/>
<reference key="1">
    <citation type="journal article" date="2002" name="Nucleic Acids Res.">
        <title>The complete genomic sequence of Mycoplasma penetrans, an intracellular bacterial pathogen in humans.</title>
        <authorList>
            <person name="Sasaki Y."/>
            <person name="Ishikawa J."/>
            <person name="Yamashita A."/>
            <person name="Oshima K."/>
            <person name="Kenri T."/>
            <person name="Furuya K."/>
            <person name="Yoshino C."/>
            <person name="Horino A."/>
            <person name="Shiba T."/>
            <person name="Sasaki T."/>
            <person name="Hattori M."/>
        </authorList>
    </citation>
    <scope>NUCLEOTIDE SEQUENCE [LARGE SCALE GENOMIC DNA]</scope>
    <source>
        <strain>HF-2</strain>
    </source>
</reference>
<protein>
    <recommendedName>
        <fullName evidence="1">Phenylalanine--tRNA ligase beta subunit</fullName>
        <ecNumber evidence="1">6.1.1.20</ecNumber>
    </recommendedName>
    <alternativeName>
        <fullName evidence="1">Phenylalanyl-tRNA synthetase beta subunit</fullName>
        <shortName evidence="1">PheRS</shortName>
    </alternativeName>
</protein>
<gene>
    <name evidence="1" type="primary">pheT</name>
    <name type="ordered locus">MYPE9260</name>
</gene>
<name>SYFB_MALP2</name>